<keyword id="KW-0687">Ribonucleoprotein</keyword>
<keyword id="KW-0689">Ribosomal protein</keyword>
<sequence length="78" mass="8859">MARVCQVTGKGPMTGNNVSHANNKTKRRFLPNLQSRRFWVESENRWVRLRVSAKAIRIIDKNGIDAVLADLRARGELA</sequence>
<feature type="chain" id="PRO_1000121591" description="Large ribosomal subunit protein bL28">
    <location>
        <begin position="1"/>
        <end position="78"/>
    </location>
</feature>
<feature type="region of interest" description="Disordered" evidence="2">
    <location>
        <begin position="1"/>
        <end position="21"/>
    </location>
</feature>
<proteinExistence type="inferred from homology"/>
<reference key="1">
    <citation type="journal article" date="2008" name="BMC Genomics">
        <title>The missing link: Bordetella petrii is endowed with both the metabolic versatility of environmental bacteria and virulence traits of pathogenic Bordetellae.</title>
        <authorList>
            <person name="Gross R."/>
            <person name="Guzman C.A."/>
            <person name="Sebaihia M."/>
            <person name="Martin dos Santos V.A.P."/>
            <person name="Pieper D.H."/>
            <person name="Koebnik R."/>
            <person name="Lechner M."/>
            <person name="Bartels D."/>
            <person name="Buhrmester J."/>
            <person name="Choudhuri J.V."/>
            <person name="Ebensen T."/>
            <person name="Gaigalat L."/>
            <person name="Herrmann S."/>
            <person name="Khachane A.N."/>
            <person name="Larisch C."/>
            <person name="Link S."/>
            <person name="Linke B."/>
            <person name="Meyer F."/>
            <person name="Mormann S."/>
            <person name="Nakunst D."/>
            <person name="Rueckert C."/>
            <person name="Schneiker-Bekel S."/>
            <person name="Schulze K."/>
            <person name="Voerholter F.-J."/>
            <person name="Yevsa T."/>
            <person name="Engle J.T."/>
            <person name="Goldman W.E."/>
            <person name="Puehler A."/>
            <person name="Goebel U.B."/>
            <person name="Goesmann A."/>
            <person name="Bloecker H."/>
            <person name="Kaiser O."/>
            <person name="Martinez-Arias R."/>
        </authorList>
    </citation>
    <scope>NUCLEOTIDE SEQUENCE [LARGE SCALE GENOMIC DNA]</scope>
    <source>
        <strain>ATCC BAA-461 / DSM 12804 / CCUG 43448</strain>
    </source>
</reference>
<name>RL28_BORPD</name>
<dbReference type="EMBL" id="AM902716">
    <property type="protein sequence ID" value="CAP43655.1"/>
    <property type="molecule type" value="Genomic_DNA"/>
</dbReference>
<dbReference type="SMR" id="A9HWU4"/>
<dbReference type="STRING" id="94624.Bpet3313"/>
<dbReference type="KEGG" id="bpt:Bpet3313"/>
<dbReference type="eggNOG" id="COG0227">
    <property type="taxonomic scope" value="Bacteria"/>
</dbReference>
<dbReference type="Proteomes" id="UP000001225">
    <property type="component" value="Chromosome"/>
</dbReference>
<dbReference type="GO" id="GO:0022625">
    <property type="term" value="C:cytosolic large ribosomal subunit"/>
    <property type="evidence" value="ECO:0007669"/>
    <property type="project" value="TreeGrafter"/>
</dbReference>
<dbReference type="GO" id="GO:0003735">
    <property type="term" value="F:structural constituent of ribosome"/>
    <property type="evidence" value="ECO:0007669"/>
    <property type="project" value="InterPro"/>
</dbReference>
<dbReference type="GO" id="GO:0006412">
    <property type="term" value="P:translation"/>
    <property type="evidence" value="ECO:0007669"/>
    <property type="project" value="UniProtKB-UniRule"/>
</dbReference>
<dbReference type="FunFam" id="2.30.170.40:FF:000001">
    <property type="entry name" value="50S ribosomal protein L28"/>
    <property type="match status" value="1"/>
</dbReference>
<dbReference type="Gene3D" id="2.30.170.40">
    <property type="entry name" value="Ribosomal protein L28/L24"/>
    <property type="match status" value="1"/>
</dbReference>
<dbReference type="HAMAP" id="MF_00373">
    <property type="entry name" value="Ribosomal_bL28"/>
    <property type="match status" value="1"/>
</dbReference>
<dbReference type="InterPro" id="IPR026569">
    <property type="entry name" value="Ribosomal_bL28"/>
</dbReference>
<dbReference type="InterPro" id="IPR034704">
    <property type="entry name" value="Ribosomal_bL28/bL31-like_sf"/>
</dbReference>
<dbReference type="InterPro" id="IPR001383">
    <property type="entry name" value="Ribosomal_bL28_bact-type"/>
</dbReference>
<dbReference type="InterPro" id="IPR037147">
    <property type="entry name" value="Ribosomal_bL28_sf"/>
</dbReference>
<dbReference type="NCBIfam" id="TIGR00009">
    <property type="entry name" value="L28"/>
    <property type="match status" value="1"/>
</dbReference>
<dbReference type="PANTHER" id="PTHR13528">
    <property type="entry name" value="39S RIBOSOMAL PROTEIN L28, MITOCHONDRIAL"/>
    <property type="match status" value="1"/>
</dbReference>
<dbReference type="PANTHER" id="PTHR13528:SF2">
    <property type="entry name" value="LARGE RIBOSOMAL SUBUNIT PROTEIN BL28M"/>
    <property type="match status" value="1"/>
</dbReference>
<dbReference type="Pfam" id="PF00830">
    <property type="entry name" value="Ribosomal_L28"/>
    <property type="match status" value="1"/>
</dbReference>
<dbReference type="SUPFAM" id="SSF143800">
    <property type="entry name" value="L28p-like"/>
    <property type="match status" value="1"/>
</dbReference>
<evidence type="ECO:0000255" key="1">
    <source>
        <dbReference type="HAMAP-Rule" id="MF_00373"/>
    </source>
</evidence>
<evidence type="ECO:0000256" key="2">
    <source>
        <dbReference type="SAM" id="MobiDB-lite"/>
    </source>
</evidence>
<evidence type="ECO:0000305" key="3"/>
<accession>A9HWU4</accession>
<protein>
    <recommendedName>
        <fullName evidence="1">Large ribosomal subunit protein bL28</fullName>
    </recommendedName>
    <alternativeName>
        <fullName evidence="3">50S ribosomal protein L28</fullName>
    </alternativeName>
</protein>
<gene>
    <name evidence="1" type="primary">rpmB</name>
    <name type="ordered locus">Bpet3313</name>
</gene>
<comment type="similarity">
    <text evidence="1">Belongs to the bacterial ribosomal protein bL28 family.</text>
</comment>
<organism>
    <name type="scientific">Bordetella petrii (strain ATCC BAA-461 / DSM 12804 / CCUG 43448)</name>
    <dbReference type="NCBI Taxonomy" id="340100"/>
    <lineage>
        <taxon>Bacteria</taxon>
        <taxon>Pseudomonadati</taxon>
        <taxon>Pseudomonadota</taxon>
        <taxon>Betaproteobacteria</taxon>
        <taxon>Burkholderiales</taxon>
        <taxon>Alcaligenaceae</taxon>
        <taxon>Bordetella</taxon>
    </lineage>
</organism>